<organism>
    <name type="scientific">Francisella tularensis subsp. holarctica (strain LVS)</name>
    <dbReference type="NCBI Taxonomy" id="376619"/>
    <lineage>
        <taxon>Bacteria</taxon>
        <taxon>Pseudomonadati</taxon>
        <taxon>Pseudomonadota</taxon>
        <taxon>Gammaproteobacteria</taxon>
        <taxon>Thiotrichales</taxon>
        <taxon>Francisellaceae</taxon>
        <taxon>Francisella</taxon>
    </lineage>
</organism>
<keyword id="KW-0997">Cell inner membrane</keyword>
<keyword id="KW-1003">Cell membrane</keyword>
<keyword id="KW-0342">GTP-binding</keyword>
<keyword id="KW-0378">Hydrolase</keyword>
<keyword id="KW-0472">Membrane</keyword>
<keyword id="KW-0547">Nucleotide-binding</keyword>
<keyword id="KW-0648">Protein biosynthesis</keyword>
<keyword id="KW-1185">Reference proteome</keyword>
<proteinExistence type="inferred from homology"/>
<gene>
    <name evidence="1" type="primary">lepA</name>
    <name type="ordered locus">FTL_0071</name>
</gene>
<name>LEPA_FRATH</name>
<sequence length="594" mass="65574">MKNIRNFSIIAHIDHGKSTLSDRFIQVCNGLSEREMKEQVLDSMDIERERGITIKAQSVTLDYTARDGQTYQLNFIDTPGHVDFSYEVSRSLAACEGALLVVDAAQGVEAQTVANCYTAIEQNLEVIPILNKIDLPFAEPDRVAQEIEEIIGIDATGATTCSAKIGIGVEDVLETIVAKVPAPEGDVNAKLQALIIDSWFDNYLGVVSLVRVKNGTIKKGEKFKVMSTGVAYQVDRLGVFTPKMKDLDHLKAGEVGFIVAGIKDIHGAPVGDTLTHAHNPTDKPVPGFKKVQPQVYAGMFTISSDDYPDFREALEKLSLNDASLFFEPEVSQALGFGFRCGFLGMLHMEIIQERLEREYNLDLITSAPTVVYKAIKKDGEIIEVDNLSKLPEPGAIAEIQEPIVRANILVPKDYVGSVITICIEKRGVQVDLNYVGNQVSITYDLPMIEVVSDFFDTLKSVTKGYGSLDYELIRYEPANMVCLDVLINGDKVDALASIVHKDQAKYKGRELVERLKELIPRQMFEVAIQAAIGGTIVARSTVKALRKNVLAKCYGGDVSRKKKLLEKQKEGKKRMKNIGSVEIPQEAFLSVLKK</sequence>
<reference key="1">
    <citation type="submission" date="2006-03" db="EMBL/GenBank/DDBJ databases">
        <title>Complete genome sequence of Francisella tularensis LVS (Live Vaccine Strain).</title>
        <authorList>
            <person name="Chain P."/>
            <person name="Larimer F."/>
            <person name="Land M."/>
            <person name="Stilwagen S."/>
            <person name="Larsson P."/>
            <person name="Bearden S."/>
            <person name="Chu M."/>
            <person name="Oyston P."/>
            <person name="Forsman M."/>
            <person name="Andersson S."/>
            <person name="Lindler L."/>
            <person name="Titball R."/>
            <person name="Garcia E."/>
        </authorList>
    </citation>
    <scope>NUCLEOTIDE SEQUENCE [LARGE SCALE GENOMIC DNA]</scope>
    <source>
        <strain>LVS</strain>
    </source>
</reference>
<protein>
    <recommendedName>
        <fullName evidence="1">Elongation factor 4</fullName>
        <shortName evidence="1">EF-4</shortName>
        <ecNumber evidence="1">3.6.5.n1</ecNumber>
    </recommendedName>
    <alternativeName>
        <fullName evidence="1">Ribosomal back-translocase LepA</fullName>
    </alternativeName>
</protein>
<dbReference type="EC" id="3.6.5.n1" evidence="1"/>
<dbReference type="EMBL" id="AM233362">
    <property type="protein sequence ID" value="CAJ78512.1"/>
    <property type="molecule type" value="Genomic_DNA"/>
</dbReference>
<dbReference type="RefSeq" id="WP_003014022.1">
    <property type="nucleotide sequence ID" value="NZ_CP009694.1"/>
</dbReference>
<dbReference type="SMR" id="Q2A5X6"/>
<dbReference type="KEGG" id="ftl:FTL_0071"/>
<dbReference type="Proteomes" id="UP000001944">
    <property type="component" value="Chromosome"/>
</dbReference>
<dbReference type="GO" id="GO:0005886">
    <property type="term" value="C:plasma membrane"/>
    <property type="evidence" value="ECO:0007669"/>
    <property type="project" value="UniProtKB-SubCell"/>
</dbReference>
<dbReference type="GO" id="GO:0005525">
    <property type="term" value="F:GTP binding"/>
    <property type="evidence" value="ECO:0007669"/>
    <property type="project" value="UniProtKB-UniRule"/>
</dbReference>
<dbReference type="GO" id="GO:0003924">
    <property type="term" value="F:GTPase activity"/>
    <property type="evidence" value="ECO:0007669"/>
    <property type="project" value="UniProtKB-UniRule"/>
</dbReference>
<dbReference type="GO" id="GO:0097216">
    <property type="term" value="F:guanosine tetraphosphate binding"/>
    <property type="evidence" value="ECO:0007669"/>
    <property type="project" value="UniProtKB-ARBA"/>
</dbReference>
<dbReference type="GO" id="GO:0043022">
    <property type="term" value="F:ribosome binding"/>
    <property type="evidence" value="ECO:0007669"/>
    <property type="project" value="UniProtKB-UniRule"/>
</dbReference>
<dbReference type="GO" id="GO:0003746">
    <property type="term" value="F:translation elongation factor activity"/>
    <property type="evidence" value="ECO:0007669"/>
    <property type="project" value="UniProtKB-UniRule"/>
</dbReference>
<dbReference type="GO" id="GO:0045727">
    <property type="term" value="P:positive regulation of translation"/>
    <property type="evidence" value="ECO:0007669"/>
    <property type="project" value="UniProtKB-UniRule"/>
</dbReference>
<dbReference type="CDD" id="cd03699">
    <property type="entry name" value="EF4_II"/>
    <property type="match status" value="1"/>
</dbReference>
<dbReference type="CDD" id="cd16260">
    <property type="entry name" value="EF4_III"/>
    <property type="match status" value="1"/>
</dbReference>
<dbReference type="CDD" id="cd01890">
    <property type="entry name" value="LepA"/>
    <property type="match status" value="1"/>
</dbReference>
<dbReference type="CDD" id="cd03709">
    <property type="entry name" value="lepA_C"/>
    <property type="match status" value="1"/>
</dbReference>
<dbReference type="FunFam" id="3.40.50.300:FF:000078">
    <property type="entry name" value="Elongation factor 4"/>
    <property type="match status" value="1"/>
</dbReference>
<dbReference type="FunFam" id="2.40.30.10:FF:000015">
    <property type="entry name" value="Translation factor GUF1, mitochondrial"/>
    <property type="match status" value="1"/>
</dbReference>
<dbReference type="FunFam" id="3.30.70.240:FF:000007">
    <property type="entry name" value="Translation factor GUF1, mitochondrial"/>
    <property type="match status" value="1"/>
</dbReference>
<dbReference type="FunFam" id="3.30.70.2570:FF:000001">
    <property type="entry name" value="Translation factor GUF1, mitochondrial"/>
    <property type="match status" value="1"/>
</dbReference>
<dbReference type="FunFam" id="3.30.70.870:FF:000004">
    <property type="entry name" value="Translation factor GUF1, mitochondrial"/>
    <property type="match status" value="1"/>
</dbReference>
<dbReference type="Gene3D" id="3.30.70.240">
    <property type="match status" value="1"/>
</dbReference>
<dbReference type="Gene3D" id="3.30.70.2570">
    <property type="entry name" value="Elongation factor 4, C-terminal domain"/>
    <property type="match status" value="1"/>
</dbReference>
<dbReference type="Gene3D" id="3.30.70.870">
    <property type="entry name" value="Elongation Factor G (Translational Gtpase), domain 3"/>
    <property type="match status" value="1"/>
</dbReference>
<dbReference type="Gene3D" id="3.40.50.300">
    <property type="entry name" value="P-loop containing nucleotide triphosphate hydrolases"/>
    <property type="match status" value="1"/>
</dbReference>
<dbReference type="Gene3D" id="2.40.30.10">
    <property type="entry name" value="Translation factors"/>
    <property type="match status" value="1"/>
</dbReference>
<dbReference type="HAMAP" id="MF_00071">
    <property type="entry name" value="LepA"/>
    <property type="match status" value="1"/>
</dbReference>
<dbReference type="InterPro" id="IPR006297">
    <property type="entry name" value="EF-4"/>
</dbReference>
<dbReference type="InterPro" id="IPR035647">
    <property type="entry name" value="EFG_III/V"/>
</dbReference>
<dbReference type="InterPro" id="IPR000640">
    <property type="entry name" value="EFG_V-like"/>
</dbReference>
<dbReference type="InterPro" id="IPR004161">
    <property type="entry name" value="EFTu-like_2"/>
</dbReference>
<dbReference type="InterPro" id="IPR031157">
    <property type="entry name" value="G_TR_CS"/>
</dbReference>
<dbReference type="InterPro" id="IPR038363">
    <property type="entry name" value="LepA_C_sf"/>
</dbReference>
<dbReference type="InterPro" id="IPR013842">
    <property type="entry name" value="LepA_CTD"/>
</dbReference>
<dbReference type="InterPro" id="IPR035654">
    <property type="entry name" value="LepA_IV"/>
</dbReference>
<dbReference type="InterPro" id="IPR027417">
    <property type="entry name" value="P-loop_NTPase"/>
</dbReference>
<dbReference type="InterPro" id="IPR005225">
    <property type="entry name" value="Small_GTP-bd"/>
</dbReference>
<dbReference type="InterPro" id="IPR000795">
    <property type="entry name" value="T_Tr_GTP-bd_dom"/>
</dbReference>
<dbReference type="NCBIfam" id="TIGR01393">
    <property type="entry name" value="lepA"/>
    <property type="match status" value="1"/>
</dbReference>
<dbReference type="NCBIfam" id="TIGR00231">
    <property type="entry name" value="small_GTP"/>
    <property type="match status" value="1"/>
</dbReference>
<dbReference type="PANTHER" id="PTHR43512:SF4">
    <property type="entry name" value="TRANSLATION FACTOR GUF1 HOMOLOG, CHLOROPLASTIC"/>
    <property type="match status" value="1"/>
</dbReference>
<dbReference type="PANTHER" id="PTHR43512">
    <property type="entry name" value="TRANSLATION FACTOR GUF1-RELATED"/>
    <property type="match status" value="1"/>
</dbReference>
<dbReference type="Pfam" id="PF00679">
    <property type="entry name" value="EFG_C"/>
    <property type="match status" value="1"/>
</dbReference>
<dbReference type="Pfam" id="PF00009">
    <property type="entry name" value="GTP_EFTU"/>
    <property type="match status" value="1"/>
</dbReference>
<dbReference type="Pfam" id="PF03144">
    <property type="entry name" value="GTP_EFTU_D2"/>
    <property type="match status" value="1"/>
</dbReference>
<dbReference type="Pfam" id="PF06421">
    <property type="entry name" value="LepA_C"/>
    <property type="match status" value="1"/>
</dbReference>
<dbReference type="PRINTS" id="PR00315">
    <property type="entry name" value="ELONGATNFCT"/>
</dbReference>
<dbReference type="SUPFAM" id="SSF54980">
    <property type="entry name" value="EF-G C-terminal domain-like"/>
    <property type="match status" value="2"/>
</dbReference>
<dbReference type="SUPFAM" id="SSF52540">
    <property type="entry name" value="P-loop containing nucleoside triphosphate hydrolases"/>
    <property type="match status" value="1"/>
</dbReference>
<dbReference type="PROSITE" id="PS00301">
    <property type="entry name" value="G_TR_1"/>
    <property type="match status" value="1"/>
</dbReference>
<dbReference type="PROSITE" id="PS51722">
    <property type="entry name" value="G_TR_2"/>
    <property type="match status" value="1"/>
</dbReference>
<evidence type="ECO:0000255" key="1">
    <source>
        <dbReference type="HAMAP-Rule" id="MF_00071"/>
    </source>
</evidence>
<accession>Q2A5X6</accession>
<feature type="chain" id="PRO_0000265657" description="Elongation factor 4">
    <location>
        <begin position="1"/>
        <end position="594"/>
    </location>
</feature>
<feature type="domain" description="tr-type G">
    <location>
        <begin position="2"/>
        <end position="184"/>
    </location>
</feature>
<feature type="binding site" evidence="1">
    <location>
        <begin position="14"/>
        <end position="19"/>
    </location>
    <ligand>
        <name>GTP</name>
        <dbReference type="ChEBI" id="CHEBI:37565"/>
    </ligand>
</feature>
<feature type="binding site" evidence="1">
    <location>
        <begin position="131"/>
        <end position="134"/>
    </location>
    <ligand>
        <name>GTP</name>
        <dbReference type="ChEBI" id="CHEBI:37565"/>
    </ligand>
</feature>
<comment type="function">
    <text evidence="1">Required for accurate and efficient protein synthesis under certain stress conditions. May act as a fidelity factor of the translation reaction, by catalyzing a one-codon backward translocation of tRNAs on improperly translocated ribosomes. Back-translocation proceeds from a post-translocation (POST) complex to a pre-translocation (PRE) complex, thus giving elongation factor G a second chance to translocate the tRNAs correctly. Binds to ribosomes in a GTP-dependent manner.</text>
</comment>
<comment type="catalytic activity">
    <reaction evidence="1">
        <text>GTP + H2O = GDP + phosphate + H(+)</text>
        <dbReference type="Rhea" id="RHEA:19669"/>
        <dbReference type="ChEBI" id="CHEBI:15377"/>
        <dbReference type="ChEBI" id="CHEBI:15378"/>
        <dbReference type="ChEBI" id="CHEBI:37565"/>
        <dbReference type="ChEBI" id="CHEBI:43474"/>
        <dbReference type="ChEBI" id="CHEBI:58189"/>
        <dbReference type="EC" id="3.6.5.n1"/>
    </reaction>
</comment>
<comment type="subcellular location">
    <subcellularLocation>
        <location evidence="1">Cell inner membrane</location>
        <topology evidence="1">Peripheral membrane protein</topology>
        <orientation evidence="1">Cytoplasmic side</orientation>
    </subcellularLocation>
</comment>
<comment type="similarity">
    <text evidence="1">Belongs to the TRAFAC class translation factor GTPase superfamily. Classic translation factor GTPase family. LepA subfamily.</text>
</comment>